<organism>
    <name type="scientific">Dickeya dadantii (strain 3937)</name>
    <name type="common">Erwinia chrysanthemi (strain 3937)</name>
    <dbReference type="NCBI Taxonomy" id="198628"/>
    <lineage>
        <taxon>Bacteria</taxon>
        <taxon>Pseudomonadati</taxon>
        <taxon>Pseudomonadota</taxon>
        <taxon>Gammaproteobacteria</taxon>
        <taxon>Enterobacterales</taxon>
        <taxon>Pectobacteriaceae</taxon>
        <taxon>Dickeya</taxon>
    </lineage>
</organism>
<name>PPIA_DICD3</name>
<dbReference type="EC" id="5.2.1.8"/>
<dbReference type="EMBL" id="Y09804">
    <property type="protein sequence ID" value="CAA70935.1"/>
    <property type="molecule type" value="Genomic_DNA"/>
</dbReference>
<dbReference type="EMBL" id="CP002038">
    <property type="protein sequence ID" value="ADN00348.1"/>
    <property type="molecule type" value="Genomic_DNA"/>
</dbReference>
<dbReference type="RefSeq" id="WP_013319748.1">
    <property type="nucleotide sequence ID" value="NC_014500.1"/>
</dbReference>
<dbReference type="SMR" id="O53021"/>
<dbReference type="STRING" id="198628.Dda3937_04190"/>
<dbReference type="GeneID" id="55490829"/>
<dbReference type="KEGG" id="ddd:Dda3937_04190"/>
<dbReference type="PATRIC" id="fig|198628.6.peg.4090"/>
<dbReference type="eggNOG" id="COG0652">
    <property type="taxonomic scope" value="Bacteria"/>
</dbReference>
<dbReference type="HOGENOM" id="CLU_012062_16_9_6"/>
<dbReference type="OrthoDB" id="9807797at2"/>
<dbReference type="Proteomes" id="UP000006859">
    <property type="component" value="Chromosome"/>
</dbReference>
<dbReference type="GO" id="GO:0042597">
    <property type="term" value="C:periplasmic space"/>
    <property type="evidence" value="ECO:0007669"/>
    <property type="project" value="UniProtKB-SubCell"/>
</dbReference>
<dbReference type="GO" id="GO:0003755">
    <property type="term" value="F:peptidyl-prolyl cis-trans isomerase activity"/>
    <property type="evidence" value="ECO:0007669"/>
    <property type="project" value="UniProtKB-KW"/>
</dbReference>
<dbReference type="GO" id="GO:0006457">
    <property type="term" value="P:protein folding"/>
    <property type="evidence" value="ECO:0007669"/>
    <property type="project" value="InterPro"/>
</dbReference>
<dbReference type="CDD" id="cd01920">
    <property type="entry name" value="cyclophilin_EcCYP_like"/>
    <property type="match status" value="1"/>
</dbReference>
<dbReference type="Gene3D" id="2.40.100.10">
    <property type="entry name" value="Cyclophilin-like"/>
    <property type="match status" value="1"/>
</dbReference>
<dbReference type="InterPro" id="IPR029000">
    <property type="entry name" value="Cyclophilin-like_dom_sf"/>
</dbReference>
<dbReference type="InterPro" id="IPR020892">
    <property type="entry name" value="Cyclophilin-type_PPIase_CS"/>
</dbReference>
<dbReference type="InterPro" id="IPR002130">
    <property type="entry name" value="Cyclophilin-type_PPIase_dom"/>
</dbReference>
<dbReference type="InterPro" id="IPR044665">
    <property type="entry name" value="E_coli_cyclophilin_A-like"/>
</dbReference>
<dbReference type="NCBIfam" id="NF008151">
    <property type="entry name" value="PRK10903.1"/>
    <property type="match status" value="1"/>
</dbReference>
<dbReference type="PANTHER" id="PTHR43246">
    <property type="entry name" value="PEPTIDYL-PROLYL CIS-TRANS ISOMERASE CYP38, CHLOROPLASTIC"/>
    <property type="match status" value="1"/>
</dbReference>
<dbReference type="Pfam" id="PF00160">
    <property type="entry name" value="Pro_isomerase"/>
    <property type="match status" value="1"/>
</dbReference>
<dbReference type="PRINTS" id="PR00153">
    <property type="entry name" value="CSAPPISMRASE"/>
</dbReference>
<dbReference type="SUPFAM" id="SSF50891">
    <property type="entry name" value="Cyclophilin-like"/>
    <property type="match status" value="1"/>
</dbReference>
<dbReference type="PROSITE" id="PS00170">
    <property type="entry name" value="CSA_PPIASE_1"/>
    <property type="match status" value="1"/>
</dbReference>
<dbReference type="PROSITE" id="PS50072">
    <property type="entry name" value="CSA_PPIASE_2"/>
    <property type="match status" value="1"/>
</dbReference>
<gene>
    <name type="primary">rotA</name>
    <name type="synonym">ppiA</name>
    <name type="ordered locus">Dda3937_04190</name>
</gene>
<feature type="signal peptide" evidence="1">
    <location>
        <begin position="1"/>
        <end position="23"/>
    </location>
</feature>
<feature type="chain" id="PRO_0000025500" description="Peptidyl-prolyl cis-trans isomerase A">
    <location>
        <begin position="24"/>
        <end position="190"/>
    </location>
</feature>
<feature type="domain" description="PPIase cyclophilin-type" evidence="2">
    <location>
        <begin position="26"/>
        <end position="187"/>
    </location>
</feature>
<feature type="sequence conflict" description="In Ref. 1; CAA70935." evidence="3" ref="1">
    <original>A</original>
    <variation>P</variation>
    <location>
        <position position="8"/>
    </location>
</feature>
<feature type="sequence conflict" description="In Ref. 1; CAA70935." evidence="3" ref="1">
    <original>S</original>
    <variation>F</variation>
    <location>
        <position position="51"/>
    </location>
</feature>
<sequence length="190" mass="20476">MSKRILAAVVTVLSLTAFSPAFAATTSTHVLLTTSAGNIELALDDQKAPVSVKNFVDYVNSGFYNGTIFHRVIPGFMVQGGGFSSDMKQKATNPPVKNEADNGLRNLRGTISMARTSEKDSATSQFFINVADNAFLDHGQRDFGYAVFGKVVKGMEVADKISQVQTENVGPYQNVPSKPIVIQSAKIIKK</sequence>
<proteinExistence type="inferred from homology"/>
<keyword id="KW-0413">Isomerase</keyword>
<keyword id="KW-0574">Periplasm</keyword>
<keyword id="KW-1185">Reference proteome</keyword>
<keyword id="KW-0697">Rotamase</keyword>
<keyword id="KW-0732">Signal</keyword>
<comment type="function">
    <text>PPIases accelerate the folding of proteins. It catalyzes the cis-trans isomerization of proline imidic peptide bonds in oligopeptides.</text>
</comment>
<comment type="catalytic activity">
    <reaction>
        <text>[protein]-peptidylproline (omega=180) = [protein]-peptidylproline (omega=0)</text>
        <dbReference type="Rhea" id="RHEA:16237"/>
        <dbReference type="Rhea" id="RHEA-COMP:10747"/>
        <dbReference type="Rhea" id="RHEA-COMP:10748"/>
        <dbReference type="ChEBI" id="CHEBI:83833"/>
        <dbReference type="ChEBI" id="CHEBI:83834"/>
        <dbReference type="EC" id="5.2.1.8"/>
    </reaction>
</comment>
<comment type="subcellular location">
    <subcellularLocation>
        <location>Periplasm</location>
    </subcellularLocation>
</comment>
<comment type="similarity">
    <text evidence="3">Belongs to the cyclophilin-type PPIase family.</text>
</comment>
<protein>
    <recommendedName>
        <fullName>Peptidyl-prolyl cis-trans isomerase A</fullName>
        <shortName>PPIase A</shortName>
        <ecNumber>5.2.1.8</ecNumber>
    </recommendedName>
    <alternativeName>
        <fullName>Cyclophilin A</fullName>
    </alternativeName>
    <alternativeName>
        <fullName>Rotamase A</fullName>
    </alternativeName>
</protein>
<accession>O53021</accession>
<accession>E0SJQ9</accession>
<reference key="1">
    <citation type="journal article" date="1997" name="FEMS Microbiol. Lett.">
        <title>Characterization of a periplasmic peptidyl-prolyl cis-trans isomerase in Erwinia chrysanthemi.</title>
        <authorList>
            <person name="Pissavin C."/>
            <person name="Hugouvieux-Cotte-Pattat N."/>
        </authorList>
    </citation>
    <scope>NUCLEOTIDE SEQUENCE [GENOMIC DNA]</scope>
    <source>
        <strain>3937</strain>
    </source>
</reference>
<reference key="2">
    <citation type="journal article" date="2011" name="J. Bacteriol.">
        <title>Genome sequence of the plant-pathogenic bacterium Dickeya dadantii 3937.</title>
        <authorList>
            <person name="Glasner J.D."/>
            <person name="Yang C.H."/>
            <person name="Reverchon S."/>
            <person name="Hugouvieux-Cotte-Pattat N."/>
            <person name="Condemine G."/>
            <person name="Bohin J.P."/>
            <person name="Van Gijsegem F."/>
            <person name="Yang S."/>
            <person name="Franza T."/>
            <person name="Expert D."/>
            <person name="Plunkett G. III"/>
            <person name="San Francisco M.J."/>
            <person name="Charkowski A.O."/>
            <person name="Py B."/>
            <person name="Bell K."/>
            <person name="Rauscher L."/>
            <person name="Rodriguez-Palenzuela P."/>
            <person name="Toussaint A."/>
            <person name="Holeva M.C."/>
            <person name="He S.Y."/>
            <person name="Douet V."/>
            <person name="Boccara M."/>
            <person name="Blanco C."/>
            <person name="Toth I."/>
            <person name="Anderson B.D."/>
            <person name="Biehl B.S."/>
            <person name="Mau B."/>
            <person name="Flynn S.M."/>
            <person name="Barras F."/>
            <person name="Lindeberg M."/>
            <person name="Birch P.R."/>
            <person name="Tsuyumu S."/>
            <person name="Shi X."/>
            <person name="Hibbing M."/>
            <person name="Yap M.N."/>
            <person name="Carpentier M."/>
            <person name="Dassa E."/>
            <person name="Umehara M."/>
            <person name="Kim J.F."/>
            <person name="Rusch M."/>
            <person name="Soni P."/>
            <person name="Mayhew G.F."/>
            <person name="Fouts D.E."/>
            <person name="Gill S.R."/>
            <person name="Blattner F.R."/>
            <person name="Keen N.T."/>
            <person name="Perna N.T."/>
        </authorList>
    </citation>
    <scope>NUCLEOTIDE SEQUENCE [LARGE SCALE GENOMIC DNA]</scope>
    <source>
        <strain>3937</strain>
    </source>
</reference>
<evidence type="ECO:0000250" key="1"/>
<evidence type="ECO:0000255" key="2">
    <source>
        <dbReference type="PROSITE-ProRule" id="PRU00156"/>
    </source>
</evidence>
<evidence type="ECO:0000305" key="3"/>